<keyword id="KW-1185">Reference proteome</keyword>
<keyword id="KW-0687">Ribonucleoprotein</keyword>
<keyword id="KW-0689">Ribosomal protein</keyword>
<keyword id="KW-0694">RNA-binding</keyword>
<keyword id="KW-0699">rRNA-binding</keyword>
<proteinExistence type="inferred from homology"/>
<name>RL21_PSEPK</name>
<comment type="function">
    <text evidence="1">This protein binds to 23S rRNA in the presence of protein L20.</text>
</comment>
<comment type="subunit">
    <text evidence="1">Part of the 50S ribosomal subunit. Contacts protein L20.</text>
</comment>
<comment type="similarity">
    <text evidence="1">Belongs to the bacterial ribosomal protein bL21 family.</text>
</comment>
<comment type="sequence caution" evidence="2">
    <conflict type="erroneous initiation">
        <sequence resource="EMBL-CDS" id="AAN66313"/>
    </conflict>
</comment>
<sequence length="104" mass="11632">MSYAVIVTGGKQYKVAEGEFLKIEKLEVATGESVTFDRVLLVANGEEVTIGAPVVAGAKVVAEVVSQGRHDKVRIIKFRRRKHHMKRMGHRQWFTEIKITGIQA</sequence>
<organism>
    <name type="scientific">Pseudomonas putida (strain ATCC 47054 / DSM 6125 / CFBP 8728 / NCIMB 11950 / KT2440)</name>
    <dbReference type="NCBI Taxonomy" id="160488"/>
    <lineage>
        <taxon>Bacteria</taxon>
        <taxon>Pseudomonadati</taxon>
        <taxon>Pseudomonadota</taxon>
        <taxon>Gammaproteobacteria</taxon>
        <taxon>Pseudomonadales</taxon>
        <taxon>Pseudomonadaceae</taxon>
        <taxon>Pseudomonas</taxon>
    </lineage>
</organism>
<reference key="1">
    <citation type="journal article" date="2002" name="Environ. Microbiol.">
        <title>Complete genome sequence and comparative analysis of the metabolically versatile Pseudomonas putida KT2440.</title>
        <authorList>
            <person name="Nelson K.E."/>
            <person name="Weinel C."/>
            <person name="Paulsen I.T."/>
            <person name="Dodson R.J."/>
            <person name="Hilbert H."/>
            <person name="Martins dos Santos V.A.P."/>
            <person name="Fouts D.E."/>
            <person name="Gill S.R."/>
            <person name="Pop M."/>
            <person name="Holmes M."/>
            <person name="Brinkac L.M."/>
            <person name="Beanan M.J."/>
            <person name="DeBoy R.T."/>
            <person name="Daugherty S.C."/>
            <person name="Kolonay J.F."/>
            <person name="Madupu R."/>
            <person name="Nelson W.C."/>
            <person name="White O."/>
            <person name="Peterson J.D."/>
            <person name="Khouri H.M."/>
            <person name="Hance I."/>
            <person name="Chris Lee P."/>
            <person name="Holtzapple E.K."/>
            <person name="Scanlan D."/>
            <person name="Tran K."/>
            <person name="Moazzez A."/>
            <person name="Utterback T.R."/>
            <person name="Rizzo M."/>
            <person name="Lee K."/>
            <person name="Kosack D."/>
            <person name="Moestl D."/>
            <person name="Wedler H."/>
            <person name="Lauber J."/>
            <person name="Stjepandic D."/>
            <person name="Hoheisel J."/>
            <person name="Straetz M."/>
            <person name="Heim S."/>
            <person name="Kiewitz C."/>
            <person name="Eisen J.A."/>
            <person name="Timmis K.N."/>
            <person name="Duesterhoeft A."/>
            <person name="Tuemmler B."/>
            <person name="Fraser C.M."/>
        </authorList>
    </citation>
    <scope>NUCLEOTIDE SEQUENCE [LARGE SCALE GENOMIC DNA]</scope>
    <source>
        <strain>ATCC 47054 / DSM 6125 / CFBP 8728 / NCIMB 11950 / KT2440</strain>
    </source>
</reference>
<accession>Q88Q10</accession>
<dbReference type="EMBL" id="AE015451">
    <property type="protein sequence ID" value="AAN66313.1"/>
    <property type="status" value="ALT_INIT"/>
    <property type="molecule type" value="Genomic_DNA"/>
</dbReference>
<dbReference type="RefSeq" id="NP_742849.3">
    <property type="nucleotide sequence ID" value="NC_002947.4"/>
</dbReference>
<dbReference type="RefSeq" id="WP_003247466.1">
    <property type="nucleotide sequence ID" value="NZ_CP169744.1"/>
</dbReference>
<dbReference type="SMR" id="Q88Q10"/>
<dbReference type="STRING" id="160488.PP_0688"/>
<dbReference type="PaxDb" id="160488-PP_0688"/>
<dbReference type="GeneID" id="97166220"/>
<dbReference type="KEGG" id="ppu:PP_0688"/>
<dbReference type="PATRIC" id="fig|160488.4.peg.736"/>
<dbReference type="eggNOG" id="COG0261">
    <property type="taxonomic scope" value="Bacteria"/>
</dbReference>
<dbReference type="HOGENOM" id="CLU_061463_3_1_6"/>
<dbReference type="OrthoDB" id="9813334at2"/>
<dbReference type="PhylomeDB" id="Q88Q10"/>
<dbReference type="Proteomes" id="UP000000556">
    <property type="component" value="Chromosome"/>
</dbReference>
<dbReference type="GO" id="GO:0005737">
    <property type="term" value="C:cytoplasm"/>
    <property type="evidence" value="ECO:0007669"/>
    <property type="project" value="UniProtKB-ARBA"/>
</dbReference>
<dbReference type="GO" id="GO:1990904">
    <property type="term" value="C:ribonucleoprotein complex"/>
    <property type="evidence" value="ECO:0007669"/>
    <property type="project" value="UniProtKB-KW"/>
</dbReference>
<dbReference type="GO" id="GO:0005840">
    <property type="term" value="C:ribosome"/>
    <property type="evidence" value="ECO:0007669"/>
    <property type="project" value="UniProtKB-KW"/>
</dbReference>
<dbReference type="GO" id="GO:0019843">
    <property type="term" value="F:rRNA binding"/>
    <property type="evidence" value="ECO:0007669"/>
    <property type="project" value="UniProtKB-UniRule"/>
</dbReference>
<dbReference type="GO" id="GO:0003735">
    <property type="term" value="F:structural constituent of ribosome"/>
    <property type="evidence" value="ECO:0007669"/>
    <property type="project" value="InterPro"/>
</dbReference>
<dbReference type="GO" id="GO:0006412">
    <property type="term" value="P:translation"/>
    <property type="evidence" value="ECO:0007669"/>
    <property type="project" value="UniProtKB-UniRule"/>
</dbReference>
<dbReference type="HAMAP" id="MF_01363">
    <property type="entry name" value="Ribosomal_bL21"/>
    <property type="match status" value="1"/>
</dbReference>
<dbReference type="InterPro" id="IPR028909">
    <property type="entry name" value="bL21-like"/>
</dbReference>
<dbReference type="InterPro" id="IPR036164">
    <property type="entry name" value="bL21-like_sf"/>
</dbReference>
<dbReference type="InterPro" id="IPR001787">
    <property type="entry name" value="Ribosomal_bL21"/>
</dbReference>
<dbReference type="InterPro" id="IPR018258">
    <property type="entry name" value="Ribosomal_bL21_CS"/>
</dbReference>
<dbReference type="NCBIfam" id="TIGR00061">
    <property type="entry name" value="L21"/>
    <property type="match status" value="1"/>
</dbReference>
<dbReference type="PANTHER" id="PTHR21349">
    <property type="entry name" value="50S RIBOSOMAL PROTEIN L21"/>
    <property type="match status" value="1"/>
</dbReference>
<dbReference type="PANTHER" id="PTHR21349:SF0">
    <property type="entry name" value="LARGE RIBOSOMAL SUBUNIT PROTEIN BL21M"/>
    <property type="match status" value="1"/>
</dbReference>
<dbReference type="Pfam" id="PF00829">
    <property type="entry name" value="Ribosomal_L21p"/>
    <property type="match status" value="1"/>
</dbReference>
<dbReference type="SUPFAM" id="SSF141091">
    <property type="entry name" value="L21p-like"/>
    <property type="match status" value="1"/>
</dbReference>
<dbReference type="PROSITE" id="PS01169">
    <property type="entry name" value="RIBOSOMAL_L21"/>
    <property type="match status" value="1"/>
</dbReference>
<protein>
    <recommendedName>
        <fullName evidence="1">Large ribosomal subunit protein bL21</fullName>
    </recommendedName>
    <alternativeName>
        <fullName evidence="2">50S ribosomal protein L21</fullName>
    </alternativeName>
</protein>
<feature type="chain" id="PRO_0000270711" description="Large ribosomal subunit protein bL21">
    <location>
        <begin position="1"/>
        <end position="104"/>
    </location>
</feature>
<gene>
    <name evidence="1" type="primary">rplU</name>
    <name type="ordered locus">PP_0688</name>
</gene>
<evidence type="ECO:0000255" key="1">
    <source>
        <dbReference type="HAMAP-Rule" id="MF_01363"/>
    </source>
</evidence>
<evidence type="ECO:0000305" key="2"/>